<protein>
    <recommendedName>
        <fullName evidence="1">ATP synthase epsilon chain 2</fullName>
    </recommendedName>
    <alternativeName>
        <fullName evidence="1">ATP synthase F1 sector epsilon subunit 2</fullName>
    </alternativeName>
    <alternativeName>
        <fullName evidence="1">F-ATPase epsilon subunit 2</fullName>
    </alternativeName>
</protein>
<reference key="1">
    <citation type="submission" date="2005-10" db="EMBL/GenBank/DDBJ databases">
        <title>Complete sequence of Pelobacter carbinolicus DSM 2380.</title>
        <authorList>
            <person name="Copeland A."/>
            <person name="Lucas S."/>
            <person name="Lapidus A."/>
            <person name="Barry K."/>
            <person name="Detter J.C."/>
            <person name="Glavina T."/>
            <person name="Hammon N."/>
            <person name="Israni S."/>
            <person name="Pitluck S."/>
            <person name="Chertkov O."/>
            <person name="Schmutz J."/>
            <person name="Larimer F."/>
            <person name="Land M."/>
            <person name="Kyrpides N."/>
            <person name="Ivanova N."/>
            <person name="Richardson P."/>
        </authorList>
    </citation>
    <scope>NUCLEOTIDE SEQUENCE [LARGE SCALE GENOMIC DNA]</scope>
    <source>
        <strain>DSM 2380 / NBRC 103641 / GraBd1</strain>
    </source>
</reference>
<feature type="chain" id="PRO_0000265853" description="ATP synthase epsilon chain 2">
    <location>
        <begin position="1"/>
        <end position="138"/>
    </location>
</feature>
<sequence>MAQKLKLEMVTPAAQVLSEEVDEIAAPGSLGQFGVLPGHTPLLTTLQVGEFSYRKGSDVYYLAVNWGYVEVAEDRVLVLVETAETQDHIDLARAKAALGRAEARLRELTPADKEYHNMQAALQRAMVRIQVAGRGGRG</sequence>
<accession>Q39ZU2</accession>
<keyword id="KW-0066">ATP synthesis</keyword>
<keyword id="KW-0997">Cell inner membrane</keyword>
<keyword id="KW-1003">Cell membrane</keyword>
<keyword id="KW-0139">CF(1)</keyword>
<keyword id="KW-0375">Hydrogen ion transport</keyword>
<keyword id="KW-0406">Ion transport</keyword>
<keyword id="KW-0472">Membrane</keyword>
<keyword id="KW-1185">Reference proteome</keyword>
<keyword id="KW-0813">Transport</keyword>
<dbReference type="EMBL" id="CP000142">
    <property type="protein sequence ID" value="ABA90365.1"/>
    <property type="molecule type" value="Genomic_DNA"/>
</dbReference>
<dbReference type="RefSeq" id="WP_011342925.1">
    <property type="nucleotide sequence ID" value="NC_007498.2"/>
</dbReference>
<dbReference type="SMR" id="Q39ZU2"/>
<dbReference type="STRING" id="338963.Pcar_3130"/>
<dbReference type="KEGG" id="pca:Pcar_3130"/>
<dbReference type="eggNOG" id="COG0355">
    <property type="taxonomic scope" value="Bacteria"/>
</dbReference>
<dbReference type="HOGENOM" id="CLU_084338_1_2_7"/>
<dbReference type="OrthoDB" id="9799969at2"/>
<dbReference type="Proteomes" id="UP000002534">
    <property type="component" value="Chromosome"/>
</dbReference>
<dbReference type="GO" id="GO:0005886">
    <property type="term" value="C:plasma membrane"/>
    <property type="evidence" value="ECO:0007669"/>
    <property type="project" value="UniProtKB-SubCell"/>
</dbReference>
<dbReference type="GO" id="GO:0045259">
    <property type="term" value="C:proton-transporting ATP synthase complex"/>
    <property type="evidence" value="ECO:0007669"/>
    <property type="project" value="UniProtKB-KW"/>
</dbReference>
<dbReference type="GO" id="GO:0005524">
    <property type="term" value="F:ATP binding"/>
    <property type="evidence" value="ECO:0007669"/>
    <property type="project" value="UniProtKB-UniRule"/>
</dbReference>
<dbReference type="GO" id="GO:0046933">
    <property type="term" value="F:proton-transporting ATP synthase activity, rotational mechanism"/>
    <property type="evidence" value="ECO:0007669"/>
    <property type="project" value="UniProtKB-UniRule"/>
</dbReference>
<dbReference type="CDD" id="cd12152">
    <property type="entry name" value="F1-ATPase_delta"/>
    <property type="match status" value="1"/>
</dbReference>
<dbReference type="Gene3D" id="1.20.5.440">
    <property type="entry name" value="ATP synthase delta/epsilon subunit, C-terminal domain"/>
    <property type="match status" value="1"/>
</dbReference>
<dbReference type="Gene3D" id="2.60.15.10">
    <property type="entry name" value="F0F1 ATP synthase delta/epsilon subunit, N-terminal"/>
    <property type="match status" value="1"/>
</dbReference>
<dbReference type="HAMAP" id="MF_00530">
    <property type="entry name" value="ATP_synth_epsil_bac"/>
    <property type="match status" value="1"/>
</dbReference>
<dbReference type="InterPro" id="IPR001469">
    <property type="entry name" value="ATP_synth_F1_dsu/esu"/>
</dbReference>
<dbReference type="InterPro" id="IPR020546">
    <property type="entry name" value="ATP_synth_F1_dsu/esu_N"/>
</dbReference>
<dbReference type="InterPro" id="IPR020547">
    <property type="entry name" value="ATP_synth_F1_esu_C"/>
</dbReference>
<dbReference type="InterPro" id="IPR036771">
    <property type="entry name" value="ATPsynth_dsu/esu_N"/>
</dbReference>
<dbReference type="NCBIfam" id="TIGR01216">
    <property type="entry name" value="ATP_synt_epsi"/>
    <property type="match status" value="1"/>
</dbReference>
<dbReference type="NCBIfam" id="NF009980">
    <property type="entry name" value="PRK13446.1"/>
    <property type="match status" value="1"/>
</dbReference>
<dbReference type="PANTHER" id="PTHR13822">
    <property type="entry name" value="ATP SYNTHASE DELTA/EPSILON CHAIN"/>
    <property type="match status" value="1"/>
</dbReference>
<dbReference type="PANTHER" id="PTHR13822:SF10">
    <property type="entry name" value="ATP SYNTHASE EPSILON CHAIN, CHLOROPLASTIC"/>
    <property type="match status" value="1"/>
</dbReference>
<dbReference type="Pfam" id="PF00401">
    <property type="entry name" value="ATP-synt_DE"/>
    <property type="match status" value="1"/>
</dbReference>
<dbReference type="Pfam" id="PF02823">
    <property type="entry name" value="ATP-synt_DE_N"/>
    <property type="match status" value="1"/>
</dbReference>
<dbReference type="SUPFAM" id="SSF51344">
    <property type="entry name" value="Epsilon subunit of F1F0-ATP synthase N-terminal domain"/>
    <property type="match status" value="1"/>
</dbReference>
<evidence type="ECO:0000255" key="1">
    <source>
        <dbReference type="HAMAP-Rule" id="MF_00530"/>
    </source>
</evidence>
<comment type="function">
    <text evidence="1">Produces ATP from ADP in the presence of a proton gradient across the membrane.</text>
</comment>
<comment type="subunit">
    <text>F-type ATPases have 2 components, CF(1) - the catalytic core - and CF(0) - the membrane proton channel. CF(1) has five subunits: alpha(3), beta(3), gamma(1), delta(1), epsilon(1). CF(0) has three main subunits: a, b and c.</text>
</comment>
<comment type="subcellular location">
    <subcellularLocation>
        <location evidence="1">Cell inner membrane</location>
        <topology evidence="1">Peripheral membrane protein</topology>
    </subcellularLocation>
</comment>
<comment type="similarity">
    <text evidence="1">Belongs to the ATPase epsilon chain family.</text>
</comment>
<gene>
    <name evidence="1" type="primary">atpC2</name>
    <name type="ordered locus">Pcar_3130</name>
</gene>
<name>ATPE2_SYNC1</name>
<proteinExistence type="inferred from homology"/>
<organism>
    <name type="scientific">Syntrophotalea carbinolica (strain DSM 2380 / NBRC 103641 / GraBd1)</name>
    <name type="common">Pelobacter carbinolicus</name>
    <dbReference type="NCBI Taxonomy" id="338963"/>
    <lineage>
        <taxon>Bacteria</taxon>
        <taxon>Pseudomonadati</taxon>
        <taxon>Thermodesulfobacteriota</taxon>
        <taxon>Desulfuromonadia</taxon>
        <taxon>Desulfuromonadales</taxon>
        <taxon>Syntrophotaleaceae</taxon>
        <taxon>Syntrophotalea</taxon>
    </lineage>
</organism>